<proteinExistence type="inferred from homology"/>
<dbReference type="EMBL" id="CP000390">
    <property type="protein sequence ID" value="ABG63116.1"/>
    <property type="molecule type" value="Genomic_DNA"/>
</dbReference>
<dbReference type="STRING" id="266779.Meso_1721"/>
<dbReference type="KEGG" id="mes:Meso_1721"/>
<dbReference type="eggNOG" id="COG3811">
    <property type="taxonomic scope" value="Bacteria"/>
</dbReference>
<dbReference type="HOGENOM" id="CLU_164736_0_0_5"/>
<dbReference type="OrthoDB" id="7204880at2"/>
<dbReference type="HAMAP" id="MF_00827">
    <property type="entry name" value="UPF0386"/>
    <property type="match status" value="1"/>
</dbReference>
<dbReference type="InterPro" id="IPR018654">
    <property type="entry name" value="YjhX_toxin"/>
</dbReference>
<dbReference type="NCBIfam" id="NF010240">
    <property type="entry name" value="PRK13687.1"/>
    <property type="match status" value="1"/>
</dbReference>
<dbReference type="Pfam" id="PF09857">
    <property type="entry name" value="YjhX_toxin"/>
    <property type="match status" value="1"/>
</dbReference>
<evidence type="ECO:0000255" key="1">
    <source>
        <dbReference type="HAMAP-Rule" id="MF_00827"/>
    </source>
</evidence>
<feature type="chain" id="PRO_1000062709" description="UPF0386 protein Meso_1721">
    <location>
        <begin position="1"/>
        <end position="85"/>
    </location>
</feature>
<accession>Q11HK9</accession>
<comment type="similarity">
    <text evidence="1">Belongs to the UPF0386 family.</text>
</comment>
<sequence>MDISRAEQRILHILAQGGCIQVEKDEDGRIAEISCVTRDGWHLPGLDLALFRKVKRKGAIASTNGGPYRITRRGLQLVRSQTDNR</sequence>
<protein>
    <recommendedName>
        <fullName evidence="1">UPF0386 protein Meso_1721</fullName>
    </recommendedName>
</protein>
<gene>
    <name type="ordered locus">Meso_1721</name>
</gene>
<name>Y1721_CHESB</name>
<reference key="1">
    <citation type="submission" date="2006-06" db="EMBL/GenBank/DDBJ databases">
        <title>Complete sequence of chromosome of Mesorhizobium sp. BNC1.</title>
        <authorList>
            <consortium name="US DOE Joint Genome Institute"/>
            <person name="Copeland A."/>
            <person name="Lucas S."/>
            <person name="Lapidus A."/>
            <person name="Barry K."/>
            <person name="Detter J.C."/>
            <person name="Glavina del Rio T."/>
            <person name="Hammon N."/>
            <person name="Israni S."/>
            <person name="Dalin E."/>
            <person name="Tice H."/>
            <person name="Pitluck S."/>
            <person name="Chertkov O."/>
            <person name="Brettin T."/>
            <person name="Bruce D."/>
            <person name="Han C."/>
            <person name="Tapia R."/>
            <person name="Gilna P."/>
            <person name="Schmutz J."/>
            <person name="Larimer F."/>
            <person name="Land M."/>
            <person name="Hauser L."/>
            <person name="Kyrpides N."/>
            <person name="Mikhailova N."/>
            <person name="Richardson P."/>
        </authorList>
    </citation>
    <scope>NUCLEOTIDE SEQUENCE [LARGE SCALE GENOMIC DNA]</scope>
    <source>
        <strain>BNC1</strain>
    </source>
</reference>
<organism>
    <name type="scientific">Chelativorans sp. (strain BNC1)</name>
    <dbReference type="NCBI Taxonomy" id="266779"/>
    <lineage>
        <taxon>Bacteria</taxon>
        <taxon>Pseudomonadati</taxon>
        <taxon>Pseudomonadota</taxon>
        <taxon>Alphaproteobacteria</taxon>
        <taxon>Hyphomicrobiales</taxon>
        <taxon>Phyllobacteriaceae</taxon>
        <taxon>Chelativorans</taxon>
    </lineage>
</organism>